<protein>
    <recommendedName>
        <fullName evidence="2">Alpha-2-macroglobulin homolog</fullName>
    </recommendedName>
</protein>
<keyword id="KW-1185">Reference proteome</keyword>
<evidence type="ECO:0000256" key="1">
    <source>
        <dbReference type="SAM" id="MobiDB-lite"/>
    </source>
</evidence>
<evidence type="ECO:0000305" key="2"/>
<feature type="chain" id="PRO_0000218151" description="Alpha-2-macroglobulin homolog">
    <location>
        <begin position="1"/>
        <end position="1013"/>
    </location>
</feature>
<feature type="region of interest" description="Disordered" evidence="1">
    <location>
        <begin position="804"/>
        <end position="844"/>
    </location>
</feature>
<gene>
    <name type="ordered locus">DR_A0293</name>
</gene>
<accession>Q9RYL9</accession>
<reference key="1">
    <citation type="journal article" date="1999" name="Science">
        <title>Genome sequence of the radioresistant bacterium Deinococcus radiodurans R1.</title>
        <authorList>
            <person name="White O."/>
            <person name="Eisen J.A."/>
            <person name="Heidelberg J.F."/>
            <person name="Hickey E.K."/>
            <person name="Peterson J.D."/>
            <person name="Dodson R.J."/>
            <person name="Haft D.H."/>
            <person name="Gwinn M.L."/>
            <person name="Nelson W.C."/>
            <person name="Richardson D.L."/>
            <person name="Moffat K.S."/>
            <person name="Qin H."/>
            <person name="Jiang L."/>
            <person name="Pamphile W."/>
            <person name="Crosby M."/>
            <person name="Shen M."/>
            <person name="Vamathevan J.J."/>
            <person name="Lam P."/>
            <person name="McDonald L.A."/>
            <person name="Utterback T.R."/>
            <person name="Zalewski C."/>
            <person name="Makarova K.S."/>
            <person name="Aravind L."/>
            <person name="Daly M.J."/>
            <person name="Minton K.W."/>
            <person name="Fleischmann R.D."/>
            <person name="Ketchum K.A."/>
            <person name="Nelson K.E."/>
            <person name="Salzberg S.L."/>
            <person name="Smith H.O."/>
            <person name="Venter J.C."/>
            <person name="Fraser C.M."/>
        </authorList>
    </citation>
    <scope>NUCLEOTIDE SEQUENCE [LARGE SCALE GENOMIC DNA]</scope>
    <source>
        <strain>ATCC 13939 / DSM 20539 / JCM 16871 / CCUG 27074 / LMG 4051 / NBRC 15346 / NCIMB 9279 / VKM B-1422 / R1</strain>
    </source>
</reference>
<comment type="similarity">
    <text evidence="2">Belongs to the protease inhibitor I39 (alpha-2-macroglobulin) family. Bacterial alpha-2-macroglobulin subfamily.</text>
</comment>
<comment type="caution">
    <text evidence="2">Lacks the conserved thioester bond that is characteristic of the alpha-2-macroglobulins.</text>
</comment>
<name>A2MGH_DEIRA</name>
<sequence>MLGAVVVRVTDLNLVSVATPGRVQVWATRLGSGAPVPNVQLSALAVKYDWQDGSRVVSRRTLAPVRTDAQGLATFSLRDGEQLSVRGQVTLGGQPHSAQLGRTENELWTGVAERARALIQTDKPVYRPGETLRGFAVLRRLGAGTRLPYTGPVTVRLRAGYPDATLAQLTVKPDADGLVRFSLPLPQDVKIGGYSLEVELPAAPSASNPNPEPDVSQVPVEVRAFVKPLFTLDLSGPQEVVSGTPLTLSARGELYQGGPANVQAEAFMVDGYASDELYPDYDAGDNGLRYQDLNSDEVYGENAAPGIDPKRRPDQTLTLRGGRATLPLKLQAKNGQPTRYAVALRARDEYGRDVWARRPVTVYPAAIKFVQPRVEGAERRRVSVAVQQVGSGKALAGRRVQAEVVRVFYVTQPDGKSVRREQRISQSVLTSDAAGRVTLNVTLTPGQEGGYVARLSTQDSAGRTARASLDIGSVYKSGAERQAPTLVLSPERSRYQPGDTARLTLNTDLPVGTPLLLSVNAEDRGQVKLIQVTGPTMTLTWPVTAALGPAFSVSAVAVRGGQTAQAFSGELLVPRFDQRLDVQVTAGSEVKPGAEVTFTVRTSRGGQPASALVTLAAVHESVYAVVGDPTPNPWRFLWGATTPQFEIRSSSSQADDGRGGGGGSEAVFYRSDLREVAAFQAVRTDAQGTAKVTVRMPEGLGSYRLSARAFTRTGAAGEARGEQRVGLPFAVRLIRPRVLTAGDTGSVAVSAADRTGQGGNVTLTLGANGQTQTANSPLQGGSATRLFSIKAPQDAQALTLTASAQRGANGERDGLRETVPVRPAGARQLLSGSGSVGADKAGGNASVSLKWPQEAQPESLTLDLAATPLQLALTGLDAALADPADRWVTTDALSARLSSNLDLAALAGPFGWPEVRTRALAQARRDLASLLALRGSDGWGWTEGSPASAEMTARALDALVQAKGAGLTDAVTLQVVRQQAELLLKKSPNSPVLAAGWRGLGPPLRPCDWPAPG</sequence>
<dbReference type="EMBL" id="AE001825">
    <property type="protein sequence ID" value="AAF12520.1"/>
    <property type="molecule type" value="Genomic_DNA"/>
</dbReference>
<dbReference type="PIR" id="B75583">
    <property type="entry name" value="B75583"/>
</dbReference>
<dbReference type="RefSeq" id="NP_285616.1">
    <property type="nucleotide sequence ID" value="NC_001264.1"/>
</dbReference>
<dbReference type="RefSeq" id="WP_010889552.1">
    <property type="nucleotide sequence ID" value="NC_001264.1"/>
</dbReference>
<dbReference type="SMR" id="Q9RYL9"/>
<dbReference type="STRING" id="243230.DR_A0293"/>
<dbReference type="PaxDb" id="243230-DR_A0293"/>
<dbReference type="EnsemblBacteria" id="AAF12520">
    <property type="protein sequence ID" value="AAF12520"/>
    <property type="gene ID" value="DR_A0293"/>
</dbReference>
<dbReference type="KEGG" id="dra:DR_A0293"/>
<dbReference type="PATRIC" id="fig|243230.17.peg.3184"/>
<dbReference type="eggNOG" id="COG2373">
    <property type="taxonomic scope" value="Bacteria"/>
</dbReference>
<dbReference type="HOGENOM" id="CLU_297314_0_0_0"/>
<dbReference type="InParanoid" id="Q9RYL9"/>
<dbReference type="OrthoDB" id="51101at2"/>
<dbReference type="Proteomes" id="UP000002524">
    <property type="component" value="Chromosome 2"/>
</dbReference>
<dbReference type="GO" id="GO:0004866">
    <property type="term" value="F:endopeptidase inhibitor activity"/>
    <property type="evidence" value="ECO:0007669"/>
    <property type="project" value="InterPro"/>
</dbReference>
<dbReference type="Gene3D" id="2.60.40.1930">
    <property type="match status" value="1"/>
</dbReference>
<dbReference type="InterPro" id="IPR011625">
    <property type="entry name" value="A2M_N_BRD"/>
</dbReference>
<dbReference type="InterPro" id="IPR001599">
    <property type="entry name" value="Macroglobln_a2"/>
</dbReference>
<dbReference type="InterPro" id="IPR002890">
    <property type="entry name" value="MG2"/>
</dbReference>
<dbReference type="InterPro" id="IPR051802">
    <property type="entry name" value="YfhM-like"/>
</dbReference>
<dbReference type="PANTHER" id="PTHR40094">
    <property type="entry name" value="ALPHA-2-MACROGLOBULIN HOMOLOG"/>
    <property type="match status" value="1"/>
</dbReference>
<dbReference type="PANTHER" id="PTHR40094:SF1">
    <property type="entry name" value="UBIQUITIN DOMAIN-CONTAINING PROTEIN"/>
    <property type="match status" value="1"/>
</dbReference>
<dbReference type="Pfam" id="PF00207">
    <property type="entry name" value="A2M"/>
    <property type="match status" value="1"/>
</dbReference>
<dbReference type="Pfam" id="PF07703">
    <property type="entry name" value="A2M_BRD"/>
    <property type="match status" value="1"/>
</dbReference>
<dbReference type="Pfam" id="PF01835">
    <property type="entry name" value="MG2"/>
    <property type="match status" value="1"/>
</dbReference>
<dbReference type="SMART" id="SM01360">
    <property type="entry name" value="A2M"/>
    <property type="match status" value="1"/>
</dbReference>
<dbReference type="SMART" id="SM01359">
    <property type="entry name" value="A2M_N_2"/>
    <property type="match status" value="1"/>
</dbReference>
<proteinExistence type="inferred from homology"/>
<organism>
    <name type="scientific">Deinococcus radiodurans (strain ATCC 13939 / DSM 20539 / JCM 16871 / CCUG 27074 / LMG 4051 / NBRC 15346 / NCIMB 9279 / VKM B-1422 / R1)</name>
    <dbReference type="NCBI Taxonomy" id="243230"/>
    <lineage>
        <taxon>Bacteria</taxon>
        <taxon>Thermotogati</taxon>
        <taxon>Deinococcota</taxon>
        <taxon>Deinococci</taxon>
        <taxon>Deinococcales</taxon>
        <taxon>Deinococcaceae</taxon>
        <taxon>Deinococcus</taxon>
    </lineage>
</organism>